<keyword id="KW-0067">ATP-binding</keyword>
<keyword id="KW-0173">Coenzyme A biosynthesis</keyword>
<keyword id="KW-0963">Cytoplasm</keyword>
<keyword id="KW-0418">Kinase</keyword>
<keyword id="KW-0547">Nucleotide-binding</keyword>
<keyword id="KW-0630">Potassium</keyword>
<keyword id="KW-1185">Reference proteome</keyword>
<keyword id="KW-0808">Transferase</keyword>
<dbReference type="EC" id="2.7.1.33" evidence="1"/>
<dbReference type="EMBL" id="CR555306">
    <property type="protein sequence ID" value="CAI08453.1"/>
    <property type="molecule type" value="Genomic_DNA"/>
</dbReference>
<dbReference type="RefSeq" id="WP_011238140.1">
    <property type="nucleotide sequence ID" value="NC_006513.1"/>
</dbReference>
<dbReference type="SMR" id="Q5P2L1"/>
<dbReference type="STRING" id="76114.ebA4111"/>
<dbReference type="KEGG" id="eba:ebA4111"/>
<dbReference type="eggNOG" id="COG1521">
    <property type="taxonomic scope" value="Bacteria"/>
</dbReference>
<dbReference type="HOGENOM" id="CLU_066627_0_0_4"/>
<dbReference type="OrthoDB" id="9781305at2"/>
<dbReference type="UniPathway" id="UPA00241">
    <property type="reaction ID" value="UER00352"/>
</dbReference>
<dbReference type="Proteomes" id="UP000006552">
    <property type="component" value="Chromosome"/>
</dbReference>
<dbReference type="GO" id="GO:0005737">
    <property type="term" value="C:cytoplasm"/>
    <property type="evidence" value="ECO:0007669"/>
    <property type="project" value="UniProtKB-SubCell"/>
</dbReference>
<dbReference type="GO" id="GO:0005524">
    <property type="term" value="F:ATP binding"/>
    <property type="evidence" value="ECO:0007669"/>
    <property type="project" value="UniProtKB-UniRule"/>
</dbReference>
<dbReference type="GO" id="GO:0004594">
    <property type="term" value="F:pantothenate kinase activity"/>
    <property type="evidence" value="ECO:0007669"/>
    <property type="project" value="UniProtKB-UniRule"/>
</dbReference>
<dbReference type="GO" id="GO:0015937">
    <property type="term" value="P:coenzyme A biosynthetic process"/>
    <property type="evidence" value="ECO:0007669"/>
    <property type="project" value="UniProtKB-UniRule"/>
</dbReference>
<dbReference type="CDD" id="cd24015">
    <property type="entry name" value="ASKHA_NBD_PanK-III"/>
    <property type="match status" value="1"/>
</dbReference>
<dbReference type="Gene3D" id="3.30.420.40">
    <property type="match status" value="2"/>
</dbReference>
<dbReference type="HAMAP" id="MF_01274">
    <property type="entry name" value="Pantothen_kinase_3"/>
    <property type="match status" value="1"/>
</dbReference>
<dbReference type="InterPro" id="IPR043129">
    <property type="entry name" value="ATPase_NBD"/>
</dbReference>
<dbReference type="InterPro" id="IPR004619">
    <property type="entry name" value="Type_III_PanK"/>
</dbReference>
<dbReference type="NCBIfam" id="TIGR00671">
    <property type="entry name" value="baf"/>
    <property type="match status" value="1"/>
</dbReference>
<dbReference type="PANTHER" id="PTHR34265">
    <property type="entry name" value="TYPE III PANTOTHENATE KINASE"/>
    <property type="match status" value="1"/>
</dbReference>
<dbReference type="PANTHER" id="PTHR34265:SF1">
    <property type="entry name" value="TYPE III PANTOTHENATE KINASE"/>
    <property type="match status" value="1"/>
</dbReference>
<dbReference type="Pfam" id="PF03309">
    <property type="entry name" value="Pan_kinase"/>
    <property type="match status" value="1"/>
</dbReference>
<dbReference type="SUPFAM" id="SSF53067">
    <property type="entry name" value="Actin-like ATPase domain"/>
    <property type="match status" value="2"/>
</dbReference>
<accession>Q5P2L1</accession>
<name>COAX_AROAE</name>
<protein>
    <recommendedName>
        <fullName evidence="1">Type III pantothenate kinase</fullName>
        <ecNumber evidence="1">2.7.1.33</ecNumber>
    </recommendedName>
    <alternativeName>
        <fullName evidence="1">PanK-III</fullName>
    </alternativeName>
    <alternativeName>
        <fullName evidence="1">Pantothenic acid kinase</fullName>
    </alternativeName>
</protein>
<evidence type="ECO:0000255" key="1">
    <source>
        <dbReference type="HAMAP-Rule" id="MF_01274"/>
    </source>
</evidence>
<sequence>MILLIDAGNTRIKWGVIRGEAWIAEGALIHAEVAALGDIVAAHPGLRRVVGTNVAGADIAAAIAAALRGVGSAPQWIHASAERCGVRNRYDNPAQLGADRWVALIGARALHRAACLVVNAGTATTVDVLAASGDFDGGIILPGEDLMRRALAGNTAQLPFAEGRYVGAPRNTADAIVSGCRNAQAGAIERMFRQIAHLPGARCLLSGGAAPQLEELLGIPFSRVDNLVLKGLAVVAREDAAA</sequence>
<feature type="chain" id="PRO_0000270860" description="Type III pantothenate kinase">
    <location>
        <begin position="1"/>
        <end position="242"/>
    </location>
</feature>
<feature type="active site" description="Proton acceptor" evidence="1">
    <location>
        <position position="99"/>
    </location>
</feature>
<feature type="binding site" evidence="1">
    <location>
        <begin position="6"/>
        <end position="13"/>
    </location>
    <ligand>
        <name>ATP</name>
        <dbReference type="ChEBI" id="CHEBI:30616"/>
    </ligand>
</feature>
<feature type="binding site" evidence="1">
    <location>
        <position position="90"/>
    </location>
    <ligand>
        <name>substrate</name>
    </ligand>
</feature>
<feature type="binding site" evidence="1">
    <location>
        <begin position="97"/>
        <end position="100"/>
    </location>
    <ligand>
        <name>substrate</name>
    </ligand>
</feature>
<feature type="binding site" evidence="1">
    <location>
        <position position="122"/>
    </location>
    <ligand>
        <name>ATP</name>
        <dbReference type="ChEBI" id="CHEBI:30616"/>
    </ligand>
</feature>
<feature type="binding site" evidence="1">
    <location>
        <position position="172"/>
    </location>
    <ligand>
        <name>substrate</name>
    </ligand>
</feature>
<organism>
    <name type="scientific">Aromatoleum aromaticum (strain DSM 19018 / LMG 30748 / EbN1)</name>
    <name type="common">Azoarcus sp. (strain EbN1)</name>
    <dbReference type="NCBI Taxonomy" id="76114"/>
    <lineage>
        <taxon>Bacteria</taxon>
        <taxon>Pseudomonadati</taxon>
        <taxon>Pseudomonadota</taxon>
        <taxon>Betaproteobacteria</taxon>
        <taxon>Rhodocyclales</taxon>
        <taxon>Rhodocyclaceae</taxon>
        <taxon>Aromatoleum</taxon>
    </lineage>
</organism>
<comment type="function">
    <text evidence="1">Catalyzes the phosphorylation of pantothenate (Pan), the first step in CoA biosynthesis.</text>
</comment>
<comment type="catalytic activity">
    <reaction evidence="1">
        <text>(R)-pantothenate + ATP = (R)-4'-phosphopantothenate + ADP + H(+)</text>
        <dbReference type="Rhea" id="RHEA:16373"/>
        <dbReference type="ChEBI" id="CHEBI:10986"/>
        <dbReference type="ChEBI" id="CHEBI:15378"/>
        <dbReference type="ChEBI" id="CHEBI:29032"/>
        <dbReference type="ChEBI" id="CHEBI:30616"/>
        <dbReference type="ChEBI" id="CHEBI:456216"/>
        <dbReference type="EC" id="2.7.1.33"/>
    </reaction>
</comment>
<comment type="cofactor">
    <cofactor evidence="1">
        <name>NH4(+)</name>
        <dbReference type="ChEBI" id="CHEBI:28938"/>
    </cofactor>
    <cofactor evidence="1">
        <name>K(+)</name>
        <dbReference type="ChEBI" id="CHEBI:29103"/>
    </cofactor>
    <text evidence="1">A monovalent cation. Ammonium or potassium.</text>
</comment>
<comment type="pathway">
    <text evidence="1">Cofactor biosynthesis; coenzyme A biosynthesis; CoA from (R)-pantothenate: step 1/5.</text>
</comment>
<comment type="subunit">
    <text evidence="1">Homodimer.</text>
</comment>
<comment type="subcellular location">
    <subcellularLocation>
        <location evidence="1">Cytoplasm</location>
    </subcellularLocation>
</comment>
<comment type="similarity">
    <text evidence="1">Belongs to the type III pantothenate kinase family.</text>
</comment>
<gene>
    <name evidence="1" type="primary">coaX</name>
    <name type="ordered locus">AZOSEA23280</name>
    <name type="ORF">ebA4111</name>
</gene>
<proteinExistence type="inferred from homology"/>
<reference key="1">
    <citation type="journal article" date="2005" name="Arch. Microbiol.">
        <title>The genome sequence of an anaerobic aromatic-degrading denitrifying bacterium, strain EbN1.</title>
        <authorList>
            <person name="Rabus R."/>
            <person name="Kube M."/>
            <person name="Heider J."/>
            <person name="Beck A."/>
            <person name="Heitmann K."/>
            <person name="Widdel F."/>
            <person name="Reinhardt R."/>
        </authorList>
    </citation>
    <scope>NUCLEOTIDE SEQUENCE [LARGE SCALE GENOMIC DNA]</scope>
    <source>
        <strain>DSM 19018 / LMG 30748 / EbN1</strain>
    </source>
</reference>